<gene>
    <name type="ordered locus">At5g37910</name>
    <name type="ORF">K18L3.11</name>
</gene>
<accession>Q9FKD5</accession>
<dbReference type="EC" id="2.3.2.27"/>
<dbReference type="EMBL" id="AB012241">
    <property type="protein sequence ID" value="BAB09037.1"/>
    <property type="molecule type" value="Genomic_DNA"/>
</dbReference>
<dbReference type="EMBL" id="CP002688">
    <property type="protein sequence ID" value="AED94246.1"/>
    <property type="molecule type" value="Genomic_DNA"/>
</dbReference>
<dbReference type="RefSeq" id="NP_198607.1">
    <property type="nucleotide sequence ID" value="NM_123150.1"/>
</dbReference>
<dbReference type="STRING" id="3702.Q9FKD5"/>
<dbReference type="GlyGen" id="Q9FKD5">
    <property type="glycosylation" value="1 site"/>
</dbReference>
<dbReference type="PaxDb" id="3702-AT5G37910.1"/>
<dbReference type="EnsemblPlants" id="AT5G37910.1">
    <property type="protein sequence ID" value="AT5G37910.1"/>
    <property type="gene ID" value="AT5G37910"/>
</dbReference>
<dbReference type="GeneID" id="833770"/>
<dbReference type="Gramene" id="AT5G37910.1">
    <property type="protein sequence ID" value="AT5G37910.1"/>
    <property type="gene ID" value="AT5G37910"/>
</dbReference>
<dbReference type="KEGG" id="ath:AT5G37910"/>
<dbReference type="Araport" id="AT5G37910"/>
<dbReference type="TAIR" id="AT5G37910"/>
<dbReference type="eggNOG" id="KOG3002">
    <property type="taxonomic scope" value="Eukaryota"/>
</dbReference>
<dbReference type="HOGENOM" id="CLU_040603_2_2_1"/>
<dbReference type="InParanoid" id="Q9FKD5"/>
<dbReference type="OMA" id="HGCTARM"/>
<dbReference type="PhylomeDB" id="Q9FKD5"/>
<dbReference type="UniPathway" id="UPA00143"/>
<dbReference type="PRO" id="PR:Q9FKD5"/>
<dbReference type="Proteomes" id="UP000006548">
    <property type="component" value="Chromosome 5"/>
</dbReference>
<dbReference type="ExpressionAtlas" id="Q9FKD5">
    <property type="expression patterns" value="baseline and differential"/>
</dbReference>
<dbReference type="GO" id="GO:0016740">
    <property type="term" value="F:transferase activity"/>
    <property type="evidence" value="ECO:0007669"/>
    <property type="project" value="UniProtKB-KW"/>
</dbReference>
<dbReference type="GO" id="GO:0008270">
    <property type="term" value="F:zinc ion binding"/>
    <property type="evidence" value="ECO:0007669"/>
    <property type="project" value="UniProtKB-KW"/>
</dbReference>
<dbReference type="GO" id="GO:0016567">
    <property type="term" value="P:protein ubiquitination"/>
    <property type="evidence" value="ECO:0007669"/>
    <property type="project" value="UniProtKB-UniPathway"/>
</dbReference>
<dbReference type="CDD" id="cd16571">
    <property type="entry name" value="RING-HC_SIAHs"/>
    <property type="match status" value="1"/>
</dbReference>
<dbReference type="Gene3D" id="3.30.40.10">
    <property type="entry name" value="Zinc/RING finger domain, C3HC4 (zinc finger)"/>
    <property type="match status" value="2"/>
</dbReference>
<dbReference type="InterPro" id="IPR049548">
    <property type="entry name" value="Sina-like_RING"/>
</dbReference>
<dbReference type="InterPro" id="IPR044286">
    <property type="entry name" value="SINL_plant"/>
</dbReference>
<dbReference type="InterPro" id="IPR001841">
    <property type="entry name" value="Znf_RING"/>
</dbReference>
<dbReference type="InterPro" id="IPR013083">
    <property type="entry name" value="Znf_RING/FYVE/PHD"/>
</dbReference>
<dbReference type="InterPro" id="IPR013010">
    <property type="entry name" value="Znf_SIAH"/>
</dbReference>
<dbReference type="PANTHER" id="PTHR46632">
    <property type="entry name" value="E3 UBIQUITIN-PROTEIN LIGASE SINA-LIKE 4"/>
    <property type="match status" value="1"/>
</dbReference>
<dbReference type="PANTHER" id="PTHR46632:SF3">
    <property type="entry name" value="E3 UBIQUITIN-PROTEIN LIGASE SINA-LIKE 7-RELATED"/>
    <property type="match status" value="1"/>
</dbReference>
<dbReference type="Pfam" id="PF21362">
    <property type="entry name" value="Sina_RING"/>
    <property type="match status" value="1"/>
</dbReference>
<dbReference type="Pfam" id="PF21361">
    <property type="entry name" value="Sina_ZnF"/>
    <property type="match status" value="1"/>
</dbReference>
<dbReference type="SUPFAM" id="SSF57850">
    <property type="entry name" value="RING/U-box"/>
    <property type="match status" value="1"/>
</dbReference>
<dbReference type="SUPFAM" id="SSF49599">
    <property type="entry name" value="TRAF domain-like"/>
    <property type="match status" value="1"/>
</dbReference>
<dbReference type="PROSITE" id="PS50089">
    <property type="entry name" value="ZF_RING_2"/>
    <property type="match status" value="1"/>
</dbReference>
<dbReference type="PROSITE" id="PS51081">
    <property type="entry name" value="ZF_SIAH"/>
    <property type="match status" value="1"/>
</dbReference>
<organism>
    <name type="scientific">Arabidopsis thaliana</name>
    <name type="common">Mouse-ear cress</name>
    <dbReference type="NCBI Taxonomy" id="3702"/>
    <lineage>
        <taxon>Eukaryota</taxon>
        <taxon>Viridiplantae</taxon>
        <taxon>Streptophyta</taxon>
        <taxon>Embryophyta</taxon>
        <taxon>Tracheophyta</taxon>
        <taxon>Spermatophyta</taxon>
        <taxon>Magnoliopsida</taxon>
        <taxon>eudicotyledons</taxon>
        <taxon>Gunneridae</taxon>
        <taxon>Pentapetalae</taxon>
        <taxon>rosids</taxon>
        <taxon>malvids</taxon>
        <taxon>Brassicales</taxon>
        <taxon>Brassicaceae</taxon>
        <taxon>Camelineae</taxon>
        <taxon>Arabidopsis</taxon>
    </lineage>
</organism>
<sequence length="276" mass="30852">MVLASISEALISQGDGGERVAKRQRSAIVLLDLDILDCPICCEALTSPIFQCDNGHLACGSCCPKLSNKCPACTLPVGHSRSRAMESVLESILIPCPNVRFGCTKSFFYGKESAHEKECIFSQCSCPSSVCDYTGSYKDLYAHYKLTHSTNIFWNIKRFRCANFFTTSMLISDKILIKRVHEKKLLLAVQCFREPCGVYVTVSFIAPSAPEVGEFSYQLSYNVDGHTVTYESPEVKRVCKVSIETPQENFMLIPHSLLRGDLLEMQVFIIENVDQE</sequence>
<feature type="chain" id="PRO_0000299198" description="Putative E3 ubiquitin-protein ligase SINA-like 9">
    <location>
        <begin position="1"/>
        <end position="276"/>
    </location>
</feature>
<feature type="zinc finger region" description="RING-type" evidence="2">
    <location>
        <begin position="38"/>
        <end position="74"/>
    </location>
</feature>
<feature type="zinc finger region" description="SIAH-type" evidence="3">
    <location>
        <begin position="91"/>
        <end position="149"/>
    </location>
</feature>
<feature type="region of interest" description="SBD" evidence="1">
    <location>
        <begin position="88"/>
        <end position="274"/>
    </location>
</feature>
<feature type="binding site" evidence="1">
    <location>
        <position position="96"/>
    </location>
    <ligand>
        <name>Zn(2+)</name>
        <dbReference type="ChEBI" id="CHEBI:29105"/>
        <label>1</label>
    </ligand>
</feature>
<feature type="binding site" evidence="1">
    <location>
        <position position="103"/>
    </location>
    <ligand>
        <name>Zn(2+)</name>
        <dbReference type="ChEBI" id="CHEBI:29105"/>
        <label>1</label>
    </ligand>
</feature>
<feature type="binding site" evidence="1">
    <location>
        <position position="115"/>
    </location>
    <ligand>
        <name>Zn(2+)</name>
        <dbReference type="ChEBI" id="CHEBI:29105"/>
        <label>1</label>
    </ligand>
</feature>
<feature type="binding site" evidence="1">
    <location>
        <position position="119"/>
    </location>
    <ligand>
        <name>Zn(2+)</name>
        <dbReference type="ChEBI" id="CHEBI:29105"/>
        <label>1</label>
    </ligand>
</feature>
<feature type="binding site" evidence="1">
    <location>
        <position position="126"/>
    </location>
    <ligand>
        <name>Zn(2+)</name>
        <dbReference type="ChEBI" id="CHEBI:29105"/>
        <label>2</label>
    </ligand>
</feature>
<feature type="binding site" evidence="1">
    <location>
        <position position="131"/>
    </location>
    <ligand>
        <name>Zn(2+)</name>
        <dbReference type="ChEBI" id="CHEBI:29105"/>
        <label>2</label>
    </ligand>
</feature>
<feature type="binding site" evidence="1">
    <location>
        <position position="143"/>
    </location>
    <ligand>
        <name>Zn(2+)</name>
        <dbReference type="ChEBI" id="CHEBI:29105"/>
        <label>2</label>
    </ligand>
</feature>
<feature type="binding site" evidence="1">
    <location>
        <position position="148"/>
    </location>
    <ligand>
        <name>Zn(2+)</name>
        <dbReference type="ChEBI" id="CHEBI:29105"/>
        <label>2</label>
    </ligand>
</feature>
<comment type="function">
    <text evidence="1">E3 ubiquitin-protein ligase that mediates ubiquitination and subsequent proteasomal degradation of target proteins. E3 ubiquitin ligases accept ubiquitin from an E2 ubiquitin-conjugating enzyme in the form of a thioester and then directly transfers the ubiquitin to targeted substrates. It probably triggers the ubiquitin-mediated degradation of different substrates.</text>
</comment>
<comment type="catalytic activity">
    <reaction>
        <text>S-ubiquitinyl-[E2 ubiquitin-conjugating enzyme]-L-cysteine + [acceptor protein]-L-lysine = [E2 ubiquitin-conjugating enzyme]-L-cysteine + N(6)-ubiquitinyl-[acceptor protein]-L-lysine.</text>
        <dbReference type="EC" id="2.3.2.27"/>
    </reaction>
</comment>
<comment type="pathway">
    <text>Protein modification; protein ubiquitination.</text>
</comment>
<comment type="domain">
    <text evidence="1">The RING-type zinc finger domain is essential for ubiquitin ligase activity.</text>
</comment>
<comment type="domain">
    <text evidence="1">The SBD domain (substrate-binding domain) mediates the homodimerization and the interaction with substrate proteins. It is related to the TRAF family.</text>
</comment>
<comment type="similarity">
    <text evidence="4">Belongs to the SINA (Seven in absentia) family.</text>
</comment>
<protein>
    <recommendedName>
        <fullName>Putative E3 ubiquitin-protein ligase SINA-like 9</fullName>
        <ecNumber>2.3.2.27</ecNumber>
    </recommendedName>
    <alternativeName>
        <fullName evidence="4">RING-type E3 ubiquitin transferase SINA-like 9</fullName>
    </alternativeName>
    <alternativeName>
        <fullName>Seven in absentia-like protein 9</fullName>
    </alternativeName>
</protein>
<proteinExistence type="inferred from homology"/>
<reference key="1">
    <citation type="journal article" date="1998" name="DNA Res.">
        <title>Structural analysis of Arabidopsis thaliana chromosome 5. VI. Sequence features of the regions of 1,367,185 bp covered by 19 physically assigned P1 and TAC clones.</title>
        <authorList>
            <person name="Kotani H."/>
            <person name="Nakamura Y."/>
            <person name="Sato S."/>
            <person name="Asamizu E."/>
            <person name="Kaneko T."/>
            <person name="Miyajima N."/>
            <person name="Tabata S."/>
        </authorList>
    </citation>
    <scope>NUCLEOTIDE SEQUENCE [LARGE SCALE GENOMIC DNA]</scope>
    <source>
        <strain>cv. Columbia</strain>
    </source>
</reference>
<reference key="2">
    <citation type="journal article" date="2017" name="Plant J.">
        <title>Araport11: a complete reannotation of the Arabidopsis thaliana reference genome.</title>
        <authorList>
            <person name="Cheng C.Y."/>
            <person name="Krishnakumar V."/>
            <person name="Chan A.P."/>
            <person name="Thibaud-Nissen F."/>
            <person name="Schobel S."/>
            <person name="Town C.D."/>
        </authorList>
    </citation>
    <scope>GENOME REANNOTATION</scope>
    <source>
        <strain>cv. Columbia</strain>
    </source>
</reference>
<evidence type="ECO:0000250" key="1"/>
<evidence type="ECO:0000255" key="2">
    <source>
        <dbReference type="PROSITE-ProRule" id="PRU00175"/>
    </source>
</evidence>
<evidence type="ECO:0000255" key="3">
    <source>
        <dbReference type="PROSITE-ProRule" id="PRU00455"/>
    </source>
</evidence>
<evidence type="ECO:0000305" key="4"/>
<keyword id="KW-0479">Metal-binding</keyword>
<keyword id="KW-1185">Reference proteome</keyword>
<keyword id="KW-0808">Transferase</keyword>
<keyword id="KW-0833">Ubl conjugation pathway</keyword>
<keyword id="KW-0862">Zinc</keyword>
<keyword id="KW-0863">Zinc-finger</keyword>
<name>SINL9_ARATH</name>